<dbReference type="EC" id="4.2.1.59" evidence="1"/>
<dbReference type="EMBL" id="CP001197">
    <property type="protein sequence ID" value="ACL09937.1"/>
    <property type="molecule type" value="Genomic_DNA"/>
</dbReference>
<dbReference type="SMR" id="B8DJ60"/>
<dbReference type="STRING" id="883.DvMF_3000"/>
<dbReference type="KEGG" id="dvm:DvMF_3000"/>
<dbReference type="eggNOG" id="COG0764">
    <property type="taxonomic scope" value="Bacteria"/>
</dbReference>
<dbReference type="HOGENOM" id="CLU_078912_1_0_7"/>
<dbReference type="OrthoDB" id="9772788at2"/>
<dbReference type="GO" id="GO:0005737">
    <property type="term" value="C:cytoplasm"/>
    <property type="evidence" value="ECO:0007669"/>
    <property type="project" value="UniProtKB-SubCell"/>
</dbReference>
<dbReference type="GO" id="GO:0016020">
    <property type="term" value="C:membrane"/>
    <property type="evidence" value="ECO:0007669"/>
    <property type="project" value="GOC"/>
</dbReference>
<dbReference type="GO" id="GO:0019171">
    <property type="term" value="F:(3R)-hydroxyacyl-[acyl-carrier-protein] dehydratase activity"/>
    <property type="evidence" value="ECO:0007669"/>
    <property type="project" value="UniProtKB-EC"/>
</dbReference>
<dbReference type="GO" id="GO:0006633">
    <property type="term" value="P:fatty acid biosynthetic process"/>
    <property type="evidence" value="ECO:0007669"/>
    <property type="project" value="UniProtKB-UniRule"/>
</dbReference>
<dbReference type="GO" id="GO:0009245">
    <property type="term" value="P:lipid A biosynthetic process"/>
    <property type="evidence" value="ECO:0007669"/>
    <property type="project" value="UniProtKB-UniRule"/>
</dbReference>
<dbReference type="CDD" id="cd01288">
    <property type="entry name" value="FabZ"/>
    <property type="match status" value="1"/>
</dbReference>
<dbReference type="FunFam" id="3.10.129.10:FF:000001">
    <property type="entry name" value="3-hydroxyacyl-[acyl-carrier-protein] dehydratase FabZ"/>
    <property type="match status" value="1"/>
</dbReference>
<dbReference type="Gene3D" id="3.10.129.10">
    <property type="entry name" value="Hotdog Thioesterase"/>
    <property type="match status" value="1"/>
</dbReference>
<dbReference type="HAMAP" id="MF_00406">
    <property type="entry name" value="FabZ"/>
    <property type="match status" value="1"/>
</dbReference>
<dbReference type="InterPro" id="IPR013114">
    <property type="entry name" value="FabA_FabZ"/>
</dbReference>
<dbReference type="InterPro" id="IPR010084">
    <property type="entry name" value="FabZ"/>
</dbReference>
<dbReference type="InterPro" id="IPR029069">
    <property type="entry name" value="HotDog_dom_sf"/>
</dbReference>
<dbReference type="NCBIfam" id="TIGR01750">
    <property type="entry name" value="fabZ"/>
    <property type="match status" value="1"/>
</dbReference>
<dbReference type="NCBIfam" id="NF000582">
    <property type="entry name" value="PRK00006.1"/>
    <property type="match status" value="1"/>
</dbReference>
<dbReference type="PANTHER" id="PTHR30272">
    <property type="entry name" value="3-HYDROXYACYL-[ACYL-CARRIER-PROTEIN] DEHYDRATASE"/>
    <property type="match status" value="1"/>
</dbReference>
<dbReference type="PANTHER" id="PTHR30272:SF1">
    <property type="entry name" value="3-HYDROXYACYL-[ACYL-CARRIER-PROTEIN] DEHYDRATASE"/>
    <property type="match status" value="1"/>
</dbReference>
<dbReference type="Pfam" id="PF07977">
    <property type="entry name" value="FabA"/>
    <property type="match status" value="1"/>
</dbReference>
<dbReference type="SUPFAM" id="SSF54637">
    <property type="entry name" value="Thioesterase/thiol ester dehydrase-isomerase"/>
    <property type="match status" value="1"/>
</dbReference>
<gene>
    <name evidence="1" type="primary">fabZ</name>
    <name type="ordered locus">DvMF_3000</name>
</gene>
<sequence>MTDPAQNILDIRQILGLLPHRYPFLLVDRVTEYVPGEYIKGYKNVTMNEPFFEGHFPGVPVMPGVLIMEALAQAGGILVVKSTDTPVEDKLFLFTGIESVRFRKPVYPGDKLELHCRLLRHKLKLWKMEGFAYVDGKLAAEAVMTAAVTNREDM</sequence>
<accession>B8DJ60</accession>
<reference key="1">
    <citation type="submission" date="2008-10" db="EMBL/GenBank/DDBJ databases">
        <title>Complete sequence of Desulfovibrio vulgaris str. 'Miyazaki F'.</title>
        <authorList>
            <person name="Lucas S."/>
            <person name="Copeland A."/>
            <person name="Lapidus A."/>
            <person name="Glavina del Rio T."/>
            <person name="Dalin E."/>
            <person name="Tice H."/>
            <person name="Bruce D."/>
            <person name="Goodwin L."/>
            <person name="Pitluck S."/>
            <person name="Sims D."/>
            <person name="Brettin T."/>
            <person name="Detter J.C."/>
            <person name="Han C."/>
            <person name="Larimer F."/>
            <person name="Land M."/>
            <person name="Hauser L."/>
            <person name="Kyrpides N."/>
            <person name="Mikhailova N."/>
            <person name="Hazen T.C."/>
            <person name="Richardson P."/>
        </authorList>
    </citation>
    <scope>NUCLEOTIDE SEQUENCE [LARGE SCALE GENOMIC DNA]</scope>
    <source>
        <strain>DSM 19637 / Miyazaki F</strain>
    </source>
</reference>
<organism>
    <name type="scientific">Nitratidesulfovibrio vulgaris (strain DSM 19637 / Miyazaki F)</name>
    <name type="common">Desulfovibrio vulgaris</name>
    <dbReference type="NCBI Taxonomy" id="883"/>
    <lineage>
        <taxon>Bacteria</taxon>
        <taxon>Pseudomonadati</taxon>
        <taxon>Thermodesulfobacteriota</taxon>
        <taxon>Desulfovibrionia</taxon>
        <taxon>Desulfovibrionales</taxon>
        <taxon>Desulfovibrionaceae</taxon>
        <taxon>Nitratidesulfovibrio</taxon>
    </lineage>
</organism>
<comment type="function">
    <text evidence="1">Involved in unsaturated fatty acids biosynthesis. Catalyzes the dehydration of short chain beta-hydroxyacyl-ACPs and long chain saturated and unsaturated beta-hydroxyacyl-ACPs.</text>
</comment>
<comment type="catalytic activity">
    <reaction evidence="1">
        <text>a (3R)-hydroxyacyl-[ACP] = a (2E)-enoyl-[ACP] + H2O</text>
        <dbReference type="Rhea" id="RHEA:13097"/>
        <dbReference type="Rhea" id="RHEA-COMP:9925"/>
        <dbReference type="Rhea" id="RHEA-COMP:9945"/>
        <dbReference type="ChEBI" id="CHEBI:15377"/>
        <dbReference type="ChEBI" id="CHEBI:78784"/>
        <dbReference type="ChEBI" id="CHEBI:78827"/>
        <dbReference type="EC" id="4.2.1.59"/>
    </reaction>
</comment>
<comment type="subcellular location">
    <subcellularLocation>
        <location evidence="1">Cytoplasm</location>
    </subcellularLocation>
</comment>
<comment type="similarity">
    <text evidence="1">Belongs to the thioester dehydratase family. FabZ subfamily.</text>
</comment>
<proteinExistence type="inferred from homology"/>
<evidence type="ECO:0000255" key="1">
    <source>
        <dbReference type="HAMAP-Rule" id="MF_00406"/>
    </source>
</evidence>
<name>FABZ_NITV9</name>
<feature type="chain" id="PRO_1000197293" description="3-hydroxyacyl-[acyl-carrier-protein] dehydratase FabZ">
    <location>
        <begin position="1"/>
        <end position="154"/>
    </location>
</feature>
<feature type="active site" evidence="1">
    <location>
        <position position="55"/>
    </location>
</feature>
<keyword id="KW-0963">Cytoplasm</keyword>
<keyword id="KW-0441">Lipid A biosynthesis</keyword>
<keyword id="KW-0444">Lipid biosynthesis</keyword>
<keyword id="KW-0443">Lipid metabolism</keyword>
<keyword id="KW-0456">Lyase</keyword>
<protein>
    <recommendedName>
        <fullName evidence="1">3-hydroxyacyl-[acyl-carrier-protein] dehydratase FabZ</fullName>
        <ecNumber evidence="1">4.2.1.59</ecNumber>
    </recommendedName>
    <alternativeName>
        <fullName evidence="1">(3R)-hydroxymyristoyl-[acyl-carrier-protein] dehydratase</fullName>
        <shortName evidence="1">(3R)-hydroxymyristoyl-ACP dehydrase</shortName>
    </alternativeName>
    <alternativeName>
        <fullName evidence="1">Beta-hydroxyacyl-ACP dehydratase</fullName>
    </alternativeName>
</protein>